<comment type="catalytic activity">
    <reaction evidence="1">
        <text>urea + 2 H2O + H(+) = hydrogencarbonate + 2 NH4(+)</text>
        <dbReference type="Rhea" id="RHEA:20557"/>
        <dbReference type="ChEBI" id="CHEBI:15377"/>
        <dbReference type="ChEBI" id="CHEBI:15378"/>
        <dbReference type="ChEBI" id="CHEBI:16199"/>
        <dbReference type="ChEBI" id="CHEBI:17544"/>
        <dbReference type="ChEBI" id="CHEBI:28938"/>
        <dbReference type="EC" id="3.5.1.5"/>
    </reaction>
</comment>
<comment type="pathway">
    <text evidence="1">Nitrogen metabolism; urea degradation; CO(2) and NH(3) from urea (urease route): step 1/1.</text>
</comment>
<comment type="subunit">
    <text evidence="1">Heterotrimer of UreA (gamma), UreB (beta) and UreC (alpha) subunits. Three heterotrimers associate to form the active enzyme.</text>
</comment>
<comment type="subcellular location">
    <subcellularLocation>
        <location evidence="1">Cytoplasm</location>
    </subcellularLocation>
</comment>
<comment type="similarity">
    <text evidence="1">Belongs to the urease gamma subunit family.</text>
</comment>
<sequence length="100" mass="11273">MHFTQREQDKLMIVVAAEVARRRKARGLKLNHPEALALISDELLEGARDGKTVAELMSYGRQILNKEDVMDGVEHMITDIEIEATFPDGTKLITVHHPIV</sequence>
<evidence type="ECO:0000255" key="1">
    <source>
        <dbReference type="HAMAP-Rule" id="MF_00739"/>
    </source>
</evidence>
<dbReference type="EC" id="3.5.1.5" evidence="1"/>
<dbReference type="EMBL" id="CP000253">
    <property type="protein sequence ID" value="ABD31571.1"/>
    <property type="molecule type" value="Genomic_DNA"/>
</dbReference>
<dbReference type="RefSeq" id="WP_000545928.1">
    <property type="nucleotide sequence ID" value="NZ_LS483365.1"/>
</dbReference>
<dbReference type="RefSeq" id="YP_501020.1">
    <property type="nucleotide sequence ID" value="NC_007795.1"/>
</dbReference>
<dbReference type="SMR" id="Q2FVW5"/>
<dbReference type="STRING" id="93061.SAOUHSC_02558"/>
<dbReference type="PaxDb" id="1280-SAXN108_2536"/>
<dbReference type="GeneID" id="3921146"/>
<dbReference type="KEGG" id="sao:SAOUHSC_02558"/>
<dbReference type="PATRIC" id="fig|93061.5.peg.2308"/>
<dbReference type="eggNOG" id="COG0831">
    <property type="taxonomic scope" value="Bacteria"/>
</dbReference>
<dbReference type="HOGENOM" id="CLU_145825_1_0_9"/>
<dbReference type="OrthoDB" id="9793527at2"/>
<dbReference type="UniPathway" id="UPA00258">
    <property type="reaction ID" value="UER00370"/>
</dbReference>
<dbReference type="Proteomes" id="UP000008816">
    <property type="component" value="Chromosome"/>
</dbReference>
<dbReference type="GO" id="GO:0005737">
    <property type="term" value="C:cytoplasm"/>
    <property type="evidence" value="ECO:0007669"/>
    <property type="project" value="UniProtKB-SubCell"/>
</dbReference>
<dbReference type="GO" id="GO:0016151">
    <property type="term" value="F:nickel cation binding"/>
    <property type="evidence" value="ECO:0007669"/>
    <property type="project" value="InterPro"/>
</dbReference>
<dbReference type="GO" id="GO:0009039">
    <property type="term" value="F:urease activity"/>
    <property type="evidence" value="ECO:0007669"/>
    <property type="project" value="UniProtKB-UniRule"/>
</dbReference>
<dbReference type="GO" id="GO:0043419">
    <property type="term" value="P:urea catabolic process"/>
    <property type="evidence" value="ECO:0007669"/>
    <property type="project" value="UniProtKB-UniRule"/>
</dbReference>
<dbReference type="CDD" id="cd00390">
    <property type="entry name" value="Urease_gamma"/>
    <property type="match status" value="1"/>
</dbReference>
<dbReference type="Gene3D" id="3.30.280.10">
    <property type="entry name" value="Urease, gamma-like subunit"/>
    <property type="match status" value="1"/>
</dbReference>
<dbReference type="HAMAP" id="MF_00739">
    <property type="entry name" value="Urease_gamma"/>
    <property type="match status" value="1"/>
</dbReference>
<dbReference type="InterPro" id="IPR012010">
    <property type="entry name" value="Urease_gamma"/>
</dbReference>
<dbReference type="InterPro" id="IPR002026">
    <property type="entry name" value="Urease_gamma/gamma-beta_su"/>
</dbReference>
<dbReference type="InterPro" id="IPR036463">
    <property type="entry name" value="Urease_gamma_sf"/>
</dbReference>
<dbReference type="InterPro" id="IPR050069">
    <property type="entry name" value="Urease_subunit"/>
</dbReference>
<dbReference type="NCBIfam" id="NF009712">
    <property type="entry name" value="PRK13241.1"/>
    <property type="match status" value="1"/>
</dbReference>
<dbReference type="NCBIfam" id="TIGR00193">
    <property type="entry name" value="urease_gam"/>
    <property type="match status" value="1"/>
</dbReference>
<dbReference type="PANTHER" id="PTHR33569">
    <property type="entry name" value="UREASE"/>
    <property type="match status" value="1"/>
</dbReference>
<dbReference type="PANTHER" id="PTHR33569:SF1">
    <property type="entry name" value="UREASE"/>
    <property type="match status" value="1"/>
</dbReference>
<dbReference type="Pfam" id="PF00547">
    <property type="entry name" value="Urease_gamma"/>
    <property type="match status" value="1"/>
</dbReference>
<dbReference type="PIRSF" id="PIRSF001223">
    <property type="entry name" value="Urease_gamma"/>
    <property type="match status" value="1"/>
</dbReference>
<dbReference type="SUPFAM" id="SSF54111">
    <property type="entry name" value="Urease, gamma-subunit"/>
    <property type="match status" value="1"/>
</dbReference>
<gene>
    <name evidence="1" type="primary">ureA</name>
    <name type="ordered locus">SAOUHSC_02558</name>
</gene>
<organism>
    <name type="scientific">Staphylococcus aureus (strain NCTC 8325 / PS 47)</name>
    <dbReference type="NCBI Taxonomy" id="93061"/>
    <lineage>
        <taxon>Bacteria</taxon>
        <taxon>Bacillati</taxon>
        <taxon>Bacillota</taxon>
        <taxon>Bacilli</taxon>
        <taxon>Bacillales</taxon>
        <taxon>Staphylococcaceae</taxon>
        <taxon>Staphylococcus</taxon>
    </lineage>
</organism>
<accession>Q2FVW5</accession>
<proteinExistence type="inferred from homology"/>
<keyword id="KW-0963">Cytoplasm</keyword>
<keyword id="KW-0378">Hydrolase</keyword>
<keyword id="KW-1185">Reference proteome</keyword>
<name>URE3_STAA8</name>
<protein>
    <recommendedName>
        <fullName evidence="1">Urease subunit gamma</fullName>
        <ecNumber evidence="1">3.5.1.5</ecNumber>
    </recommendedName>
    <alternativeName>
        <fullName evidence="1">Urea amidohydrolase subunit gamma</fullName>
    </alternativeName>
</protein>
<feature type="chain" id="PRO_1000046371" description="Urease subunit gamma">
    <location>
        <begin position="1"/>
        <end position="100"/>
    </location>
</feature>
<reference key="1">
    <citation type="book" date="2006" name="Gram positive pathogens, 2nd edition">
        <title>The Staphylococcus aureus NCTC 8325 genome.</title>
        <editorList>
            <person name="Fischetti V."/>
            <person name="Novick R."/>
            <person name="Ferretti J."/>
            <person name="Portnoy D."/>
            <person name="Rood J."/>
        </editorList>
        <authorList>
            <person name="Gillaspy A.F."/>
            <person name="Worrell V."/>
            <person name="Orvis J."/>
            <person name="Roe B.A."/>
            <person name="Dyer D.W."/>
            <person name="Iandolo J.J."/>
        </authorList>
    </citation>
    <scope>NUCLEOTIDE SEQUENCE [LARGE SCALE GENOMIC DNA]</scope>
    <source>
        <strain>NCTC 8325 / PS 47</strain>
    </source>
</reference>